<accession>A4FWB6</accession>
<feature type="chain" id="PRO_1000086132" description="Small ribosomal subunit protein uS3">
    <location>
        <begin position="1"/>
        <end position="211"/>
    </location>
</feature>
<feature type="domain" description="KH type-2" evidence="1">
    <location>
        <begin position="16"/>
        <end position="85"/>
    </location>
</feature>
<comment type="function">
    <text evidence="1">Binds the lower part of the 30S subunit head.</text>
</comment>
<comment type="subunit">
    <text evidence="1">Part of the 30S ribosomal subunit.</text>
</comment>
<comment type="similarity">
    <text evidence="1">Belongs to the universal ribosomal protein uS3 family.</text>
</comment>
<gene>
    <name evidence="1" type="primary">rps3</name>
    <name type="ordered locus">MmarC5_0174</name>
</gene>
<organism>
    <name type="scientific">Methanococcus maripaludis (strain C5 / ATCC BAA-1333)</name>
    <dbReference type="NCBI Taxonomy" id="402880"/>
    <lineage>
        <taxon>Archaea</taxon>
        <taxon>Methanobacteriati</taxon>
        <taxon>Methanobacteriota</taxon>
        <taxon>Methanomada group</taxon>
        <taxon>Methanococci</taxon>
        <taxon>Methanococcales</taxon>
        <taxon>Methanococcaceae</taxon>
        <taxon>Methanococcus</taxon>
    </lineage>
</organism>
<proteinExistence type="inferred from homology"/>
<reference key="1">
    <citation type="submission" date="2007-03" db="EMBL/GenBank/DDBJ databases">
        <title>Complete sequence of chromosome of Methanococcus maripaludis C5.</title>
        <authorList>
            <consortium name="US DOE Joint Genome Institute"/>
            <person name="Copeland A."/>
            <person name="Lucas S."/>
            <person name="Lapidus A."/>
            <person name="Barry K."/>
            <person name="Glavina del Rio T."/>
            <person name="Dalin E."/>
            <person name="Tice H."/>
            <person name="Pitluck S."/>
            <person name="Chertkov O."/>
            <person name="Brettin T."/>
            <person name="Bruce D."/>
            <person name="Han C."/>
            <person name="Detter J.C."/>
            <person name="Schmutz J."/>
            <person name="Larimer F."/>
            <person name="Land M."/>
            <person name="Hauser L."/>
            <person name="Kyrpides N."/>
            <person name="Mikhailova N."/>
            <person name="Sieprawska-Lupa M."/>
            <person name="Whitman W.B."/>
            <person name="Richardson P."/>
        </authorList>
    </citation>
    <scope>NUCLEOTIDE SEQUENCE [LARGE SCALE GENOMIC DNA]</scope>
    <source>
        <strain>C5 / ATCC BAA-1333</strain>
    </source>
</reference>
<keyword id="KW-0687">Ribonucleoprotein</keyword>
<keyword id="KW-0689">Ribosomal protein</keyword>
<keyword id="KW-0694">RNA-binding</keyword>
<keyword id="KW-0699">rRNA-binding</keyword>
<protein>
    <recommendedName>
        <fullName evidence="1">Small ribosomal subunit protein uS3</fullName>
    </recommendedName>
    <alternativeName>
        <fullName evidence="2">30S ribosomal protein S3</fullName>
    </alternativeName>
</protein>
<evidence type="ECO:0000255" key="1">
    <source>
        <dbReference type="HAMAP-Rule" id="MF_01309"/>
    </source>
</evidence>
<evidence type="ECO:0000305" key="2"/>
<name>RS3_METM5</name>
<sequence length="211" mass="23325">MIERTFVGENVSETLIDEYFKTKLVRAGYSHIDLKKTPIGTRITVFAEKPGFVIGRKGKMVKELTETLAKEYAVKNPQIEVKQVENPDLDPAIVGHKIASSLERGMHFRRTAHSAIRRVMGSGAKGVSIIVSGKLSGERSRTEKFMDGYMKHCGEPAEALVNKSHQLAKLKLGVVGVTVKIMKPDVTLPDEITILSGEIKEVTEYSEASQE</sequence>
<dbReference type="EMBL" id="CP000609">
    <property type="protein sequence ID" value="ABO34491.1"/>
    <property type="molecule type" value="Genomic_DNA"/>
</dbReference>
<dbReference type="RefSeq" id="WP_011867949.1">
    <property type="nucleotide sequence ID" value="NC_009135.1"/>
</dbReference>
<dbReference type="SMR" id="A4FWB6"/>
<dbReference type="STRING" id="402880.MmarC5_0174"/>
<dbReference type="GeneID" id="4928967"/>
<dbReference type="KEGG" id="mmq:MmarC5_0174"/>
<dbReference type="eggNOG" id="arCOG04097">
    <property type="taxonomic scope" value="Archaea"/>
</dbReference>
<dbReference type="HOGENOM" id="CLU_058591_1_1_2"/>
<dbReference type="OrthoDB" id="9126at2157"/>
<dbReference type="Proteomes" id="UP000000253">
    <property type="component" value="Chromosome"/>
</dbReference>
<dbReference type="GO" id="GO:0022627">
    <property type="term" value="C:cytosolic small ribosomal subunit"/>
    <property type="evidence" value="ECO:0007669"/>
    <property type="project" value="TreeGrafter"/>
</dbReference>
<dbReference type="GO" id="GO:0019843">
    <property type="term" value="F:rRNA binding"/>
    <property type="evidence" value="ECO:0007669"/>
    <property type="project" value="UniProtKB-UniRule"/>
</dbReference>
<dbReference type="GO" id="GO:0003735">
    <property type="term" value="F:structural constituent of ribosome"/>
    <property type="evidence" value="ECO:0007669"/>
    <property type="project" value="InterPro"/>
</dbReference>
<dbReference type="GO" id="GO:0006412">
    <property type="term" value="P:translation"/>
    <property type="evidence" value="ECO:0007669"/>
    <property type="project" value="UniProtKB-UniRule"/>
</dbReference>
<dbReference type="CDD" id="cd02411">
    <property type="entry name" value="KH-II_30S_S3_arch"/>
    <property type="match status" value="1"/>
</dbReference>
<dbReference type="FunFam" id="3.30.300.20:FF:000001">
    <property type="entry name" value="30S ribosomal protein S3"/>
    <property type="match status" value="1"/>
</dbReference>
<dbReference type="Gene3D" id="3.30.300.20">
    <property type="match status" value="1"/>
</dbReference>
<dbReference type="Gene3D" id="3.30.1140.32">
    <property type="entry name" value="Ribosomal protein S3, C-terminal domain"/>
    <property type="match status" value="1"/>
</dbReference>
<dbReference type="HAMAP" id="MF_01309_A">
    <property type="entry name" value="Ribosomal_uS3_A"/>
    <property type="match status" value="1"/>
</dbReference>
<dbReference type="InterPro" id="IPR004087">
    <property type="entry name" value="KH_dom"/>
</dbReference>
<dbReference type="InterPro" id="IPR015946">
    <property type="entry name" value="KH_dom-like_a/b"/>
</dbReference>
<dbReference type="InterPro" id="IPR004044">
    <property type="entry name" value="KH_dom_type_2"/>
</dbReference>
<dbReference type="InterPro" id="IPR009019">
    <property type="entry name" value="KH_sf_prok-type"/>
</dbReference>
<dbReference type="InterPro" id="IPR036419">
    <property type="entry name" value="Ribosomal_S3_C_sf"/>
</dbReference>
<dbReference type="InterPro" id="IPR027488">
    <property type="entry name" value="Ribosomal_uS3_arc"/>
</dbReference>
<dbReference type="InterPro" id="IPR001351">
    <property type="entry name" value="Ribosomal_uS3_C"/>
</dbReference>
<dbReference type="InterPro" id="IPR018280">
    <property type="entry name" value="Ribosomal_uS3_CS"/>
</dbReference>
<dbReference type="InterPro" id="IPR005703">
    <property type="entry name" value="Ribosomal_uS3_euk/arc"/>
</dbReference>
<dbReference type="NCBIfam" id="NF003219">
    <property type="entry name" value="PRK04191.1"/>
    <property type="match status" value="1"/>
</dbReference>
<dbReference type="NCBIfam" id="TIGR01008">
    <property type="entry name" value="uS3_euk_arch"/>
    <property type="match status" value="1"/>
</dbReference>
<dbReference type="PANTHER" id="PTHR11760">
    <property type="entry name" value="30S/40S RIBOSOMAL PROTEIN S3"/>
    <property type="match status" value="1"/>
</dbReference>
<dbReference type="PANTHER" id="PTHR11760:SF32">
    <property type="entry name" value="SMALL RIBOSOMAL SUBUNIT PROTEIN US3"/>
    <property type="match status" value="1"/>
</dbReference>
<dbReference type="Pfam" id="PF07650">
    <property type="entry name" value="KH_2"/>
    <property type="match status" value="1"/>
</dbReference>
<dbReference type="Pfam" id="PF00189">
    <property type="entry name" value="Ribosomal_S3_C"/>
    <property type="match status" value="1"/>
</dbReference>
<dbReference type="SMART" id="SM00322">
    <property type="entry name" value="KH"/>
    <property type="match status" value="1"/>
</dbReference>
<dbReference type="SUPFAM" id="SSF54814">
    <property type="entry name" value="Prokaryotic type KH domain (KH-domain type II)"/>
    <property type="match status" value="1"/>
</dbReference>
<dbReference type="SUPFAM" id="SSF54821">
    <property type="entry name" value="Ribosomal protein S3 C-terminal domain"/>
    <property type="match status" value="1"/>
</dbReference>
<dbReference type="PROSITE" id="PS50823">
    <property type="entry name" value="KH_TYPE_2"/>
    <property type="match status" value="1"/>
</dbReference>
<dbReference type="PROSITE" id="PS00548">
    <property type="entry name" value="RIBOSOMAL_S3"/>
    <property type="match status" value="1"/>
</dbReference>